<name>Y607_FRATW</name>
<comment type="function">
    <text evidence="1">Binds to DNA and alters its conformation. May be involved in regulation of gene expression, nucleoid organization and DNA protection.</text>
</comment>
<comment type="subunit">
    <text evidence="1">Homodimer.</text>
</comment>
<comment type="subcellular location">
    <subcellularLocation>
        <location evidence="1">Cytoplasm</location>
        <location evidence="1">Nucleoid</location>
    </subcellularLocation>
</comment>
<comment type="similarity">
    <text evidence="1">Belongs to the YbaB/EbfC family.</text>
</comment>
<proteinExistence type="inferred from homology"/>
<reference key="1">
    <citation type="journal article" date="2007" name="PLoS ONE">
        <title>Complete genomic characterization of a pathogenic A.II strain of Francisella tularensis subspecies tularensis.</title>
        <authorList>
            <person name="Beckstrom-Sternberg S.M."/>
            <person name="Auerbach R.K."/>
            <person name="Godbole S."/>
            <person name="Pearson J.V."/>
            <person name="Beckstrom-Sternberg J.S."/>
            <person name="Deng Z."/>
            <person name="Munk C."/>
            <person name="Kubota K."/>
            <person name="Zhou Y."/>
            <person name="Bruce D."/>
            <person name="Noronha J."/>
            <person name="Scheuermann R.H."/>
            <person name="Wang A."/>
            <person name="Wei X."/>
            <person name="Wang J."/>
            <person name="Hao J."/>
            <person name="Wagner D.M."/>
            <person name="Brettin T.S."/>
            <person name="Brown N."/>
            <person name="Gilna P."/>
            <person name="Keim P.S."/>
        </authorList>
    </citation>
    <scope>NUCLEOTIDE SEQUENCE [LARGE SCALE GENOMIC DNA]</scope>
    <source>
        <strain>WY96-3418</strain>
    </source>
</reference>
<organism>
    <name type="scientific">Francisella tularensis subsp. tularensis (strain WY96-3418)</name>
    <dbReference type="NCBI Taxonomy" id="418136"/>
    <lineage>
        <taxon>Bacteria</taxon>
        <taxon>Pseudomonadati</taxon>
        <taxon>Pseudomonadota</taxon>
        <taxon>Gammaproteobacteria</taxon>
        <taxon>Thiotrichales</taxon>
        <taxon>Francisellaceae</taxon>
        <taxon>Francisella</taxon>
    </lineage>
</organism>
<keyword id="KW-0963">Cytoplasm</keyword>
<keyword id="KW-0238">DNA-binding</keyword>
<sequence>MNFDMSKLMQQAQKMQEQMKKAQQERENMEVIGESGAGLVTVTMTGKYDVKSVSIDNSLMSEDKEILEDLIAAAVNNAVKKVEENSTASSDIYKMAKDAGIDLPSGINFPFK</sequence>
<dbReference type="EMBL" id="CP000608">
    <property type="protein sequence ID" value="ABO46515.1"/>
    <property type="molecule type" value="Genomic_DNA"/>
</dbReference>
<dbReference type="RefSeq" id="WP_003025528.1">
    <property type="nucleotide sequence ID" value="NC_009257.1"/>
</dbReference>
<dbReference type="SMR" id="A4IX63"/>
<dbReference type="KEGG" id="ftw:FTW_0607"/>
<dbReference type="HOGENOM" id="CLU_140930_0_0_6"/>
<dbReference type="GO" id="GO:0043590">
    <property type="term" value="C:bacterial nucleoid"/>
    <property type="evidence" value="ECO:0007669"/>
    <property type="project" value="UniProtKB-UniRule"/>
</dbReference>
<dbReference type="GO" id="GO:0005829">
    <property type="term" value="C:cytosol"/>
    <property type="evidence" value="ECO:0007669"/>
    <property type="project" value="TreeGrafter"/>
</dbReference>
<dbReference type="GO" id="GO:0003677">
    <property type="term" value="F:DNA binding"/>
    <property type="evidence" value="ECO:0007669"/>
    <property type="project" value="UniProtKB-UniRule"/>
</dbReference>
<dbReference type="Gene3D" id="3.30.1310.10">
    <property type="entry name" value="Nucleoid-associated protein YbaB-like domain"/>
    <property type="match status" value="1"/>
</dbReference>
<dbReference type="HAMAP" id="MF_00274">
    <property type="entry name" value="DNA_YbaB_EbfC"/>
    <property type="match status" value="1"/>
</dbReference>
<dbReference type="InterPro" id="IPR036894">
    <property type="entry name" value="YbaB-like_sf"/>
</dbReference>
<dbReference type="InterPro" id="IPR004401">
    <property type="entry name" value="YbaB/EbfC"/>
</dbReference>
<dbReference type="NCBIfam" id="TIGR00103">
    <property type="entry name" value="DNA_YbaB_EbfC"/>
    <property type="match status" value="1"/>
</dbReference>
<dbReference type="PANTHER" id="PTHR33449">
    <property type="entry name" value="NUCLEOID-ASSOCIATED PROTEIN YBAB"/>
    <property type="match status" value="1"/>
</dbReference>
<dbReference type="PANTHER" id="PTHR33449:SF1">
    <property type="entry name" value="NUCLEOID-ASSOCIATED PROTEIN YBAB"/>
    <property type="match status" value="1"/>
</dbReference>
<dbReference type="Pfam" id="PF02575">
    <property type="entry name" value="YbaB_DNA_bd"/>
    <property type="match status" value="1"/>
</dbReference>
<dbReference type="PIRSF" id="PIRSF004555">
    <property type="entry name" value="UCP004555"/>
    <property type="match status" value="1"/>
</dbReference>
<dbReference type="SUPFAM" id="SSF82607">
    <property type="entry name" value="YbaB-like"/>
    <property type="match status" value="1"/>
</dbReference>
<accession>A4IX63</accession>
<protein>
    <recommendedName>
        <fullName evidence="1">Nucleoid-associated protein FTW_0607</fullName>
    </recommendedName>
</protein>
<gene>
    <name type="ordered locus">FTW_0607</name>
</gene>
<evidence type="ECO:0000255" key="1">
    <source>
        <dbReference type="HAMAP-Rule" id="MF_00274"/>
    </source>
</evidence>
<evidence type="ECO:0000256" key="2">
    <source>
        <dbReference type="SAM" id="MobiDB-lite"/>
    </source>
</evidence>
<feature type="chain" id="PRO_1000071919" description="Nucleoid-associated protein FTW_0607">
    <location>
        <begin position="1"/>
        <end position="112"/>
    </location>
</feature>
<feature type="region of interest" description="Disordered" evidence="2">
    <location>
        <begin position="1"/>
        <end position="27"/>
    </location>
</feature>
<feature type="compositionally biased region" description="Basic and acidic residues" evidence="2">
    <location>
        <begin position="17"/>
        <end position="27"/>
    </location>
</feature>